<keyword id="KW-0524">Neurogenesis</keyword>
<keyword id="KW-1185">Reference proteome</keyword>
<keyword id="KW-0770">Synapse</keyword>
<keyword id="KW-0833">Ubl conjugation pathway</keyword>
<evidence type="ECO:0000250" key="1"/>
<evidence type="ECO:0000250" key="2">
    <source>
        <dbReference type="UniProtKB" id="Q9V6L9"/>
    </source>
</evidence>
<evidence type="ECO:0000255" key="3">
    <source>
        <dbReference type="PROSITE-ProRule" id="PRU00080"/>
    </source>
</evidence>
<evidence type="ECO:0000255" key="4">
    <source>
        <dbReference type="PROSITE-ProRule" id="PRU00548"/>
    </source>
</evidence>
<evidence type="ECO:0000305" key="5"/>
<evidence type="ECO:0000312" key="6">
    <source>
        <dbReference type="EMBL" id="EAA05647.3"/>
    </source>
</evidence>
<organism>
    <name type="scientific">Anopheles gambiae</name>
    <name type="common">African malaria mosquito</name>
    <dbReference type="NCBI Taxonomy" id="7165"/>
    <lineage>
        <taxon>Eukaryota</taxon>
        <taxon>Metazoa</taxon>
        <taxon>Ecdysozoa</taxon>
        <taxon>Arthropoda</taxon>
        <taxon>Hexapoda</taxon>
        <taxon>Insecta</taxon>
        <taxon>Pterygota</taxon>
        <taxon>Neoptera</taxon>
        <taxon>Endopterygota</taxon>
        <taxon>Diptera</taxon>
        <taxon>Nematocera</taxon>
        <taxon>Culicoidea</taxon>
        <taxon>Culicidae</taxon>
        <taxon>Anophelinae</taxon>
        <taxon>Anopheles</taxon>
    </lineage>
</organism>
<feature type="chain" id="PRO_0000383308" description="F-box/SPRY domain-containing protein 1">
    <location>
        <begin position="1"/>
        <end position="258"/>
    </location>
</feature>
<feature type="domain" description="F-box" evidence="3">
    <location>
        <begin position="6"/>
        <end position="54"/>
    </location>
</feature>
<feature type="domain" description="B30.2/SPRY" evidence="4">
    <location>
        <begin position="64"/>
        <end position="256"/>
    </location>
</feature>
<accession>Q7QGL9</accession>
<sequence>MEEDLMEYAPNIPDNVLELIFSFLKLQDLRNCTLVCKSWYRFFCDENNEVWRAQCLQKVPAEAFKNDLLTVVPTYKAKLRAYFHAWNPFDCSRHVYIKPNGFTLHRNPVAQSTDGSRGKIGFKHGRHAWEVRWEGPLGTVAVVGIATKDAAIQCHGYYALLGADDQSWGWNLVDNLLLHNGDAHGIYPLLNNAPKYKVGERIRVILDCDENTLSFEKNYEFLGVAFTDLPEKNFYPTVAAVYGNTEISMVYLGAPLDG</sequence>
<name>FBSP1_ANOGA</name>
<protein>
    <recommendedName>
        <fullName evidence="2">F-box/SPRY domain-containing protein 1</fullName>
    </recommendedName>
</protein>
<reference evidence="6" key="1">
    <citation type="journal article" date="2002" name="Science">
        <title>The genome sequence of the malaria mosquito Anopheles gambiae.</title>
        <authorList>
            <person name="Holt R.A."/>
            <person name="Subramanian G.M."/>
            <person name="Halpern A."/>
            <person name="Sutton G.G."/>
            <person name="Charlab R."/>
            <person name="Nusskern D.R."/>
            <person name="Wincker P."/>
            <person name="Clark A.G."/>
            <person name="Ribeiro J.M.C."/>
            <person name="Wides R."/>
            <person name="Salzberg S.L."/>
            <person name="Loftus B.J."/>
            <person name="Yandell M.D."/>
            <person name="Majoros W.H."/>
            <person name="Rusch D.B."/>
            <person name="Lai Z."/>
            <person name="Kraft C.L."/>
            <person name="Abril J.F."/>
            <person name="Anthouard V."/>
            <person name="Arensburger P."/>
            <person name="Atkinson P.W."/>
            <person name="Baden H."/>
            <person name="de Berardinis V."/>
            <person name="Baldwin D."/>
            <person name="Benes V."/>
            <person name="Biedler J."/>
            <person name="Blass C."/>
            <person name="Bolanos R."/>
            <person name="Boscus D."/>
            <person name="Barnstead M."/>
            <person name="Cai S."/>
            <person name="Center A."/>
            <person name="Chaturverdi K."/>
            <person name="Christophides G.K."/>
            <person name="Chrystal M.A.M."/>
            <person name="Clamp M."/>
            <person name="Cravchik A."/>
            <person name="Curwen V."/>
            <person name="Dana A."/>
            <person name="Delcher A."/>
            <person name="Dew I."/>
            <person name="Evans C.A."/>
            <person name="Flanigan M."/>
            <person name="Grundschober-Freimoser A."/>
            <person name="Friedli L."/>
            <person name="Gu Z."/>
            <person name="Guan P."/>
            <person name="Guigo R."/>
            <person name="Hillenmeyer M.E."/>
            <person name="Hladun S.L."/>
            <person name="Hogan J.R."/>
            <person name="Hong Y.S."/>
            <person name="Hoover J."/>
            <person name="Jaillon O."/>
            <person name="Ke Z."/>
            <person name="Kodira C.D."/>
            <person name="Kokoza E."/>
            <person name="Koutsos A."/>
            <person name="Letunic I."/>
            <person name="Levitsky A.A."/>
            <person name="Liang Y."/>
            <person name="Lin J.-J."/>
            <person name="Lobo N.F."/>
            <person name="Lopez J.R."/>
            <person name="Malek J.A."/>
            <person name="McIntosh T.C."/>
            <person name="Meister S."/>
            <person name="Miller J.R."/>
            <person name="Mobarry C."/>
            <person name="Mongin E."/>
            <person name="Murphy S.D."/>
            <person name="O'Brochta D.A."/>
            <person name="Pfannkoch C."/>
            <person name="Qi R."/>
            <person name="Regier M.A."/>
            <person name="Remington K."/>
            <person name="Shao H."/>
            <person name="Sharakhova M.V."/>
            <person name="Sitter C.D."/>
            <person name="Shetty J."/>
            <person name="Smith T.J."/>
            <person name="Strong R."/>
            <person name="Sun J."/>
            <person name="Thomasova D."/>
            <person name="Ton L.Q."/>
            <person name="Topalis P."/>
            <person name="Tu Z.J."/>
            <person name="Unger M.F."/>
            <person name="Walenz B."/>
            <person name="Wang A.H."/>
            <person name="Wang J."/>
            <person name="Wang M."/>
            <person name="Wang X."/>
            <person name="Woodford K.J."/>
            <person name="Wortman J.R."/>
            <person name="Wu M."/>
            <person name="Yao A."/>
            <person name="Zdobnov E.M."/>
            <person name="Zhang H."/>
            <person name="Zhao Q."/>
            <person name="Zhao S."/>
            <person name="Zhu S.C."/>
            <person name="Zhimulev I."/>
            <person name="Coluzzi M."/>
            <person name="della Torre A."/>
            <person name="Roth C.W."/>
            <person name="Louis C."/>
            <person name="Kalush F."/>
            <person name="Mural R.J."/>
            <person name="Myers E.W."/>
            <person name="Adams M.D."/>
            <person name="Smith H.O."/>
            <person name="Broder S."/>
            <person name="Gardner M.J."/>
            <person name="Fraser C.M."/>
            <person name="Birney E."/>
            <person name="Bork P."/>
            <person name="Brey P.T."/>
            <person name="Venter J.C."/>
            <person name="Weissenbach J."/>
            <person name="Kafatos F.C."/>
            <person name="Collins F.H."/>
            <person name="Hoffman S.L."/>
        </authorList>
    </citation>
    <scope>NUCLEOTIDE SEQUENCE [LARGE SCALE GENOMIC DNA]</scope>
    <source>
        <strain evidence="6">PEST</strain>
    </source>
</reference>
<proteinExistence type="inferred from homology"/>
<dbReference type="EMBL" id="AAAB01008831">
    <property type="protein sequence ID" value="EAA05647.3"/>
    <property type="molecule type" value="Genomic_DNA"/>
</dbReference>
<dbReference type="SMR" id="Q7QGL9"/>
<dbReference type="FunCoup" id="Q7QGL9">
    <property type="interactions" value="1327"/>
</dbReference>
<dbReference type="STRING" id="7165.Q7QGL9"/>
<dbReference type="PaxDb" id="7165-AGAP012460-PA"/>
<dbReference type="EnsemblMetazoa" id="AGAP012460-RA">
    <property type="protein sequence ID" value="AGAP012460-PA"/>
    <property type="gene ID" value="AGAP012460"/>
</dbReference>
<dbReference type="GeneID" id="1271157"/>
<dbReference type="KEGG" id="aga:1271157"/>
<dbReference type="CTD" id="36460"/>
<dbReference type="VEuPathDB" id="VectorBase:AGAMI1_000032"/>
<dbReference type="VEuPathDB" id="VectorBase:AGAP012460"/>
<dbReference type="eggNOG" id="KOG3953">
    <property type="taxonomic scope" value="Eukaryota"/>
</dbReference>
<dbReference type="HOGENOM" id="CLU_046756_1_0_1"/>
<dbReference type="InParanoid" id="Q7QGL9"/>
<dbReference type="OMA" id="ATKRASM"/>
<dbReference type="PhylomeDB" id="Q7QGL9"/>
<dbReference type="UniPathway" id="UPA00143"/>
<dbReference type="Proteomes" id="UP000007062">
    <property type="component" value="Unassembled WGS sequence"/>
</dbReference>
<dbReference type="GO" id="GO:0031594">
    <property type="term" value="C:neuromuscular junction"/>
    <property type="evidence" value="ECO:0000250"/>
    <property type="project" value="UniProtKB"/>
</dbReference>
<dbReference type="GO" id="GO:0019005">
    <property type="term" value="C:SCF ubiquitin ligase complex"/>
    <property type="evidence" value="ECO:0000318"/>
    <property type="project" value="GO_Central"/>
</dbReference>
<dbReference type="GO" id="GO:0045202">
    <property type="term" value="C:synapse"/>
    <property type="evidence" value="ECO:0000318"/>
    <property type="project" value="GO_Central"/>
</dbReference>
<dbReference type="GO" id="GO:0045886">
    <property type="term" value="P:negative regulation of synaptic assembly at neuromuscular junction"/>
    <property type="evidence" value="ECO:0000250"/>
    <property type="project" value="UniProtKB"/>
</dbReference>
<dbReference type="GO" id="GO:0007274">
    <property type="term" value="P:neuromuscular synaptic transmission"/>
    <property type="evidence" value="ECO:0000250"/>
    <property type="project" value="UniProtKB"/>
</dbReference>
<dbReference type="GO" id="GO:0043161">
    <property type="term" value="P:proteasome-mediated ubiquitin-dependent protein catabolic process"/>
    <property type="evidence" value="ECO:0000318"/>
    <property type="project" value="GO_Central"/>
</dbReference>
<dbReference type="GO" id="GO:0016567">
    <property type="term" value="P:protein ubiquitination"/>
    <property type="evidence" value="ECO:0007669"/>
    <property type="project" value="UniProtKB-UniPathway"/>
</dbReference>
<dbReference type="GO" id="GO:0060386">
    <property type="term" value="P:synapse assembly involved in innervation"/>
    <property type="evidence" value="ECO:0000318"/>
    <property type="project" value="GO_Central"/>
</dbReference>
<dbReference type="CDD" id="cd22111">
    <property type="entry name" value="F-box_FBXO45"/>
    <property type="match status" value="1"/>
</dbReference>
<dbReference type="CDD" id="cd12907">
    <property type="entry name" value="SPRY_Fbox"/>
    <property type="match status" value="1"/>
</dbReference>
<dbReference type="FunFam" id="1.20.1280.50:FF:000055">
    <property type="entry name" value="F-box/SPRY domain-containing protein 1"/>
    <property type="match status" value="1"/>
</dbReference>
<dbReference type="FunFam" id="2.60.120.920:FF:000017">
    <property type="entry name" value="F-box/SPRY domain-containing protein 1"/>
    <property type="match status" value="1"/>
</dbReference>
<dbReference type="Gene3D" id="1.20.1280.50">
    <property type="match status" value="1"/>
</dbReference>
<dbReference type="Gene3D" id="2.60.120.920">
    <property type="match status" value="1"/>
</dbReference>
<dbReference type="InterPro" id="IPR001870">
    <property type="entry name" value="B30.2/SPRY"/>
</dbReference>
<dbReference type="InterPro" id="IPR043136">
    <property type="entry name" value="B30.2/SPRY_sf"/>
</dbReference>
<dbReference type="InterPro" id="IPR013320">
    <property type="entry name" value="ConA-like_dom_sf"/>
</dbReference>
<dbReference type="InterPro" id="IPR036047">
    <property type="entry name" value="F-box-like_dom_sf"/>
</dbReference>
<dbReference type="InterPro" id="IPR001810">
    <property type="entry name" value="F-box_dom"/>
</dbReference>
<dbReference type="InterPro" id="IPR050672">
    <property type="entry name" value="FBXO45-Fsn/SPSB_families"/>
</dbReference>
<dbReference type="InterPro" id="IPR003877">
    <property type="entry name" value="SPRY_dom"/>
</dbReference>
<dbReference type="InterPro" id="IPR035784">
    <property type="entry name" value="SPRY_FBXO45"/>
</dbReference>
<dbReference type="PANTHER" id="PTHR12245:SF7">
    <property type="entry name" value="F-BOX_SPRY DOMAIN-CONTAINING PROTEIN 1"/>
    <property type="match status" value="1"/>
</dbReference>
<dbReference type="PANTHER" id="PTHR12245">
    <property type="entry name" value="SPRY DOMAIN CONTAINING SOCS BOX PROTEIN"/>
    <property type="match status" value="1"/>
</dbReference>
<dbReference type="Pfam" id="PF12937">
    <property type="entry name" value="F-box-like"/>
    <property type="match status" value="1"/>
</dbReference>
<dbReference type="Pfam" id="PF00622">
    <property type="entry name" value="SPRY"/>
    <property type="match status" value="1"/>
</dbReference>
<dbReference type="SMART" id="SM00256">
    <property type="entry name" value="FBOX"/>
    <property type="match status" value="1"/>
</dbReference>
<dbReference type="SMART" id="SM00449">
    <property type="entry name" value="SPRY"/>
    <property type="match status" value="1"/>
</dbReference>
<dbReference type="SUPFAM" id="SSF49899">
    <property type="entry name" value="Concanavalin A-like lectins/glucanases"/>
    <property type="match status" value="1"/>
</dbReference>
<dbReference type="SUPFAM" id="SSF81383">
    <property type="entry name" value="F-box domain"/>
    <property type="match status" value="1"/>
</dbReference>
<dbReference type="PROSITE" id="PS50188">
    <property type="entry name" value="B302_SPRY"/>
    <property type="match status" value="1"/>
</dbReference>
<dbReference type="PROSITE" id="PS50181">
    <property type="entry name" value="FBOX"/>
    <property type="match status" value="1"/>
</dbReference>
<gene>
    <name evidence="2" type="primary">Fsn</name>
    <name type="ORF">AGAP012460</name>
</gene>
<comment type="function">
    <text evidence="1">Required in the presynaptic motoneuron to down-regulate the levels of wnd and restrain synaptic terminal growth at the neuromuscular junction (NMJ).</text>
</comment>
<comment type="pathway">
    <text evidence="2">Protein modification; protein ubiquitination.</text>
</comment>
<comment type="subunit">
    <text evidence="2">Component of an E3 ubiquitin ligase complex composed of hiw and Fsn.</text>
</comment>
<comment type="subcellular location">
    <subcellularLocation>
        <location evidence="2">Synapse</location>
    </subcellularLocation>
</comment>
<comment type="similarity">
    <text evidence="5">Belongs to the FBXO45/Fsn family.</text>
</comment>